<accession>A9N3P6</accession>
<evidence type="ECO:0000255" key="1">
    <source>
        <dbReference type="HAMAP-Rule" id="MF_00170"/>
    </source>
</evidence>
<protein>
    <recommendedName>
        <fullName evidence="1">Ribose-5-phosphate isomerase A</fullName>
        <ecNumber evidence="1">5.3.1.6</ecNumber>
    </recommendedName>
    <alternativeName>
        <fullName evidence="1">Phosphoriboisomerase A</fullName>
        <shortName evidence="1">PRI</shortName>
    </alternativeName>
</protein>
<feature type="chain" id="PRO_1000077076" description="Ribose-5-phosphate isomerase A">
    <location>
        <begin position="1"/>
        <end position="219"/>
    </location>
</feature>
<feature type="active site" description="Proton acceptor" evidence="1">
    <location>
        <position position="103"/>
    </location>
</feature>
<feature type="binding site" evidence="1">
    <location>
        <begin position="28"/>
        <end position="31"/>
    </location>
    <ligand>
        <name>substrate</name>
    </ligand>
</feature>
<feature type="binding site" evidence="1">
    <location>
        <begin position="81"/>
        <end position="84"/>
    </location>
    <ligand>
        <name>substrate</name>
    </ligand>
</feature>
<feature type="binding site" evidence="1">
    <location>
        <begin position="94"/>
        <end position="97"/>
    </location>
    <ligand>
        <name>substrate</name>
    </ligand>
</feature>
<feature type="binding site" evidence="1">
    <location>
        <position position="121"/>
    </location>
    <ligand>
        <name>substrate</name>
    </ligand>
</feature>
<dbReference type="EC" id="5.3.1.6" evidence="1"/>
<dbReference type="EMBL" id="CP000886">
    <property type="protein sequence ID" value="ABX69149.1"/>
    <property type="molecule type" value="Genomic_DNA"/>
</dbReference>
<dbReference type="RefSeq" id="WP_000189741.1">
    <property type="nucleotide sequence ID" value="NC_010102.1"/>
</dbReference>
<dbReference type="SMR" id="A9N3P6"/>
<dbReference type="KEGG" id="spq:SPAB_03818"/>
<dbReference type="PATRIC" id="fig|1016998.12.peg.3597"/>
<dbReference type="HOGENOM" id="CLU_056590_1_1_6"/>
<dbReference type="BioCyc" id="SENT1016998:SPAB_RS15525-MONOMER"/>
<dbReference type="UniPathway" id="UPA00115">
    <property type="reaction ID" value="UER00412"/>
</dbReference>
<dbReference type="Proteomes" id="UP000008556">
    <property type="component" value="Chromosome"/>
</dbReference>
<dbReference type="GO" id="GO:0005829">
    <property type="term" value="C:cytosol"/>
    <property type="evidence" value="ECO:0007669"/>
    <property type="project" value="TreeGrafter"/>
</dbReference>
<dbReference type="GO" id="GO:0004751">
    <property type="term" value="F:ribose-5-phosphate isomerase activity"/>
    <property type="evidence" value="ECO:0007669"/>
    <property type="project" value="UniProtKB-UniRule"/>
</dbReference>
<dbReference type="GO" id="GO:0006014">
    <property type="term" value="P:D-ribose metabolic process"/>
    <property type="evidence" value="ECO:0007669"/>
    <property type="project" value="TreeGrafter"/>
</dbReference>
<dbReference type="GO" id="GO:0009052">
    <property type="term" value="P:pentose-phosphate shunt, non-oxidative branch"/>
    <property type="evidence" value="ECO:0007669"/>
    <property type="project" value="UniProtKB-UniRule"/>
</dbReference>
<dbReference type="CDD" id="cd01398">
    <property type="entry name" value="RPI_A"/>
    <property type="match status" value="1"/>
</dbReference>
<dbReference type="FunFam" id="3.30.70.260:FF:000004">
    <property type="entry name" value="Ribose-5-phosphate isomerase A"/>
    <property type="match status" value="1"/>
</dbReference>
<dbReference type="FunFam" id="3.40.50.1360:FF:000001">
    <property type="entry name" value="Ribose-5-phosphate isomerase A"/>
    <property type="match status" value="1"/>
</dbReference>
<dbReference type="Gene3D" id="3.30.70.260">
    <property type="match status" value="1"/>
</dbReference>
<dbReference type="Gene3D" id="3.40.50.1360">
    <property type="match status" value="1"/>
</dbReference>
<dbReference type="HAMAP" id="MF_00170">
    <property type="entry name" value="Rib_5P_isom_A"/>
    <property type="match status" value="1"/>
</dbReference>
<dbReference type="InterPro" id="IPR037171">
    <property type="entry name" value="NagB/RpiA_transferase-like"/>
</dbReference>
<dbReference type="InterPro" id="IPR020672">
    <property type="entry name" value="Ribose5P_isomerase_typA_subgr"/>
</dbReference>
<dbReference type="InterPro" id="IPR004788">
    <property type="entry name" value="Ribose5P_isomerase_type_A"/>
</dbReference>
<dbReference type="NCBIfam" id="NF001924">
    <property type="entry name" value="PRK00702.1"/>
    <property type="match status" value="1"/>
</dbReference>
<dbReference type="NCBIfam" id="TIGR00021">
    <property type="entry name" value="rpiA"/>
    <property type="match status" value="1"/>
</dbReference>
<dbReference type="PANTHER" id="PTHR11934">
    <property type="entry name" value="RIBOSE-5-PHOSPHATE ISOMERASE"/>
    <property type="match status" value="1"/>
</dbReference>
<dbReference type="PANTHER" id="PTHR11934:SF0">
    <property type="entry name" value="RIBOSE-5-PHOSPHATE ISOMERASE"/>
    <property type="match status" value="1"/>
</dbReference>
<dbReference type="Pfam" id="PF06026">
    <property type="entry name" value="Rib_5-P_isom_A"/>
    <property type="match status" value="1"/>
</dbReference>
<dbReference type="SUPFAM" id="SSF75445">
    <property type="entry name" value="D-ribose-5-phosphate isomerase (RpiA), lid domain"/>
    <property type="match status" value="1"/>
</dbReference>
<dbReference type="SUPFAM" id="SSF100950">
    <property type="entry name" value="NagB/RpiA/CoA transferase-like"/>
    <property type="match status" value="1"/>
</dbReference>
<comment type="function">
    <text evidence="1">Catalyzes the reversible conversion of ribose-5-phosphate to ribulose 5-phosphate.</text>
</comment>
<comment type="catalytic activity">
    <reaction evidence="1">
        <text>aldehydo-D-ribose 5-phosphate = D-ribulose 5-phosphate</text>
        <dbReference type="Rhea" id="RHEA:14657"/>
        <dbReference type="ChEBI" id="CHEBI:58121"/>
        <dbReference type="ChEBI" id="CHEBI:58273"/>
        <dbReference type="EC" id="5.3.1.6"/>
    </reaction>
</comment>
<comment type="pathway">
    <text evidence="1">Carbohydrate degradation; pentose phosphate pathway; D-ribose 5-phosphate from D-ribulose 5-phosphate (non-oxidative stage): step 1/1.</text>
</comment>
<comment type="subunit">
    <text evidence="1">Homodimer.</text>
</comment>
<comment type="similarity">
    <text evidence="1">Belongs to the ribose 5-phosphate isomerase family.</text>
</comment>
<proteinExistence type="inferred from homology"/>
<keyword id="KW-0413">Isomerase</keyword>
<gene>
    <name evidence="1" type="primary">rpiA</name>
    <name type="ordered locus">SPAB_03818</name>
</gene>
<organism>
    <name type="scientific">Salmonella paratyphi B (strain ATCC BAA-1250 / SPB7)</name>
    <dbReference type="NCBI Taxonomy" id="1016998"/>
    <lineage>
        <taxon>Bacteria</taxon>
        <taxon>Pseudomonadati</taxon>
        <taxon>Pseudomonadota</taxon>
        <taxon>Gammaproteobacteria</taxon>
        <taxon>Enterobacterales</taxon>
        <taxon>Enterobacteriaceae</taxon>
        <taxon>Salmonella</taxon>
    </lineage>
</organism>
<name>RPIA_SALPB</name>
<sequence length="219" mass="22895">MTQDELKKAVGWAALQYVQPGTIVGVGTGSTAAHFIDALGTMKGQIEGAVSSSDASTEKLKGLGIHVFDLNEVDSLGIYVDGADEINGHMQMIKGGGAALTREKIIASVAEKFICIADASKQVDILGKFPLPVEVIPMARSAVARQLVKLGGRPEYRQNVVTDNGNVILDVYGMEILDPIALENAINAIPGVVTVGLFANRGADVALIGTPDGVKTIVK</sequence>
<reference key="1">
    <citation type="submission" date="2007-11" db="EMBL/GenBank/DDBJ databases">
        <authorList>
            <consortium name="The Salmonella enterica serovar Paratyphi B Genome Sequencing Project"/>
            <person name="McClelland M."/>
            <person name="Sanderson E.K."/>
            <person name="Porwollik S."/>
            <person name="Spieth J."/>
            <person name="Clifton W.S."/>
            <person name="Fulton R."/>
            <person name="Cordes M."/>
            <person name="Wollam A."/>
            <person name="Shah N."/>
            <person name="Pepin K."/>
            <person name="Bhonagiri V."/>
            <person name="Nash W."/>
            <person name="Johnson M."/>
            <person name="Thiruvilangam P."/>
            <person name="Wilson R."/>
        </authorList>
    </citation>
    <scope>NUCLEOTIDE SEQUENCE [LARGE SCALE GENOMIC DNA]</scope>
    <source>
        <strain>ATCC BAA-1250 / SPB7</strain>
    </source>
</reference>